<organism>
    <name type="scientific">Yersinia pseudotuberculosis serotype O:3 (strain YPIII)</name>
    <dbReference type="NCBI Taxonomy" id="502800"/>
    <lineage>
        <taxon>Bacteria</taxon>
        <taxon>Pseudomonadati</taxon>
        <taxon>Pseudomonadota</taxon>
        <taxon>Gammaproteobacteria</taxon>
        <taxon>Enterobacterales</taxon>
        <taxon>Yersiniaceae</taxon>
        <taxon>Yersinia</taxon>
    </lineage>
</organism>
<accession>B1JGL9</accession>
<comment type="function">
    <text evidence="1">NDH-1 shuttles electrons from NADH, via FMN and iron-sulfur (Fe-S) centers, to quinones in the respiratory chain. The immediate electron acceptor for the enzyme in this species is believed to be ubiquinone. Couples the redox reaction to proton translocation (for every two electrons transferred, four hydrogen ions are translocated across the cytoplasmic membrane), and thus conserves the redox energy in a proton gradient. This subunit may bind ubiquinone.</text>
</comment>
<comment type="catalytic activity">
    <reaction evidence="1">
        <text>a quinone + NADH + 5 H(+)(in) = a quinol + NAD(+) + 4 H(+)(out)</text>
        <dbReference type="Rhea" id="RHEA:57888"/>
        <dbReference type="ChEBI" id="CHEBI:15378"/>
        <dbReference type="ChEBI" id="CHEBI:24646"/>
        <dbReference type="ChEBI" id="CHEBI:57540"/>
        <dbReference type="ChEBI" id="CHEBI:57945"/>
        <dbReference type="ChEBI" id="CHEBI:132124"/>
    </reaction>
</comment>
<comment type="subunit">
    <text evidence="1">NDH-1 is composed of 13 different subunits. Subunits NuoA, H, J, K, L, M, N constitute the membrane sector of the complex.</text>
</comment>
<comment type="subcellular location">
    <subcellularLocation>
        <location evidence="1">Cell inner membrane</location>
        <topology evidence="1">Multi-pass membrane protein</topology>
    </subcellularLocation>
</comment>
<comment type="similarity">
    <text evidence="1">Belongs to the complex I subunit 1 family.</text>
</comment>
<name>NUOH_YERPY</name>
<dbReference type="EC" id="7.1.1.-" evidence="1"/>
<dbReference type="EMBL" id="CP000950">
    <property type="protein sequence ID" value="ACA67859.1"/>
    <property type="molecule type" value="Genomic_DNA"/>
</dbReference>
<dbReference type="RefSeq" id="WP_012303932.1">
    <property type="nucleotide sequence ID" value="NZ_CP009792.1"/>
</dbReference>
<dbReference type="SMR" id="B1JGL9"/>
<dbReference type="KEGG" id="ypy:YPK_1566"/>
<dbReference type="PATRIC" id="fig|502800.11.peg.2210"/>
<dbReference type="GO" id="GO:0005886">
    <property type="term" value="C:plasma membrane"/>
    <property type="evidence" value="ECO:0007669"/>
    <property type="project" value="UniProtKB-SubCell"/>
</dbReference>
<dbReference type="GO" id="GO:0003954">
    <property type="term" value="F:NADH dehydrogenase activity"/>
    <property type="evidence" value="ECO:0007669"/>
    <property type="project" value="TreeGrafter"/>
</dbReference>
<dbReference type="GO" id="GO:0016655">
    <property type="term" value="F:oxidoreductase activity, acting on NAD(P)H, quinone or similar compound as acceptor"/>
    <property type="evidence" value="ECO:0007669"/>
    <property type="project" value="UniProtKB-UniRule"/>
</dbReference>
<dbReference type="GO" id="GO:0048038">
    <property type="term" value="F:quinone binding"/>
    <property type="evidence" value="ECO:0007669"/>
    <property type="project" value="UniProtKB-KW"/>
</dbReference>
<dbReference type="GO" id="GO:0009060">
    <property type="term" value="P:aerobic respiration"/>
    <property type="evidence" value="ECO:0007669"/>
    <property type="project" value="TreeGrafter"/>
</dbReference>
<dbReference type="HAMAP" id="MF_01350">
    <property type="entry name" value="NDH1_NuoH"/>
    <property type="match status" value="1"/>
</dbReference>
<dbReference type="InterPro" id="IPR001694">
    <property type="entry name" value="NADH_UbQ_OxRdtase_su1/FPO"/>
</dbReference>
<dbReference type="InterPro" id="IPR018086">
    <property type="entry name" value="NADH_UbQ_OxRdtase_su1_CS"/>
</dbReference>
<dbReference type="NCBIfam" id="NF004740">
    <property type="entry name" value="PRK06076.1-1"/>
    <property type="match status" value="1"/>
</dbReference>
<dbReference type="NCBIfam" id="NF004741">
    <property type="entry name" value="PRK06076.1-2"/>
    <property type="match status" value="1"/>
</dbReference>
<dbReference type="PANTHER" id="PTHR11432">
    <property type="entry name" value="NADH DEHYDROGENASE SUBUNIT 1"/>
    <property type="match status" value="1"/>
</dbReference>
<dbReference type="PANTHER" id="PTHR11432:SF3">
    <property type="entry name" value="NADH-UBIQUINONE OXIDOREDUCTASE CHAIN 1"/>
    <property type="match status" value="1"/>
</dbReference>
<dbReference type="Pfam" id="PF00146">
    <property type="entry name" value="NADHdh"/>
    <property type="match status" value="1"/>
</dbReference>
<dbReference type="PROSITE" id="PS00667">
    <property type="entry name" value="COMPLEX1_ND1_1"/>
    <property type="match status" value="1"/>
</dbReference>
<dbReference type="PROSITE" id="PS00668">
    <property type="entry name" value="COMPLEX1_ND1_2"/>
    <property type="match status" value="1"/>
</dbReference>
<sequence length="325" mass="36213">MSWFTPELIEILISVLKAVVILLVVVTCGAFMSFGERRLLGLFQNRYGPNRVGWGGSLQLVADMIKMFFKEDWVPRFSDRAIFTLAPVIAFTSLLLSFAIVPVSPTWAVADLNIGILFFLMMAGLAVYAVLFAGWASNNKYSLLGAMRASAQTLSYEVFLGLSLMGVVAQVGSFNMQDIVNSQEHVWNVIPQFFGFLTFAIAGVAVCHRHPFDQPEAEQELADGYHIEYSGMKFGLFFVGEYIGIVTVSALIVTLFFGGWQGPFLPPFIWFALKTAFFMVMFILIRASLPRPRYDQVMSFGWKVCLPLTLLNLLATAAVILYNAQ</sequence>
<feature type="chain" id="PRO_1000143628" description="NADH-quinone oxidoreductase subunit H">
    <location>
        <begin position="1"/>
        <end position="325"/>
    </location>
</feature>
<feature type="transmembrane region" description="Helical" evidence="1">
    <location>
        <begin position="11"/>
        <end position="31"/>
    </location>
</feature>
<feature type="transmembrane region" description="Helical" evidence="1">
    <location>
        <begin position="81"/>
        <end position="101"/>
    </location>
</feature>
<feature type="transmembrane region" description="Helical" evidence="1">
    <location>
        <begin position="114"/>
        <end position="134"/>
    </location>
</feature>
<feature type="transmembrane region" description="Helical" evidence="1">
    <location>
        <begin position="154"/>
        <end position="174"/>
    </location>
</feature>
<feature type="transmembrane region" description="Helical" evidence="1">
    <location>
        <begin position="186"/>
        <end position="206"/>
    </location>
</feature>
<feature type="transmembrane region" description="Helical" evidence="1">
    <location>
        <begin position="237"/>
        <end position="257"/>
    </location>
</feature>
<feature type="transmembrane region" description="Helical" evidence="1">
    <location>
        <begin position="265"/>
        <end position="285"/>
    </location>
</feature>
<feature type="transmembrane region" description="Helical" evidence="1">
    <location>
        <begin position="304"/>
        <end position="324"/>
    </location>
</feature>
<evidence type="ECO:0000255" key="1">
    <source>
        <dbReference type="HAMAP-Rule" id="MF_01350"/>
    </source>
</evidence>
<keyword id="KW-0997">Cell inner membrane</keyword>
<keyword id="KW-1003">Cell membrane</keyword>
<keyword id="KW-0472">Membrane</keyword>
<keyword id="KW-0520">NAD</keyword>
<keyword id="KW-0874">Quinone</keyword>
<keyword id="KW-1278">Translocase</keyword>
<keyword id="KW-0812">Transmembrane</keyword>
<keyword id="KW-1133">Transmembrane helix</keyword>
<keyword id="KW-0830">Ubiquinone</keyword>
<gene>
    <name evidence="1" type="primary">nuoH</name>
    <name type="ordered locus">YPK_1566</name>
</gene>
<proteinExistence type="inferred from homology"/>
<protein>
    <recommendedName>
        <fullName evidence="1">NADH-quinone oxidoreductase subunit H</fullName>
        <ecNumber evidence="1">7.1.1.-</ecNumber>
    </recommendedName>
    <alternativeName>
        <fullName evidence="1">NADH dehydrogenase I subunit H</fullName>
    </alternativeName>
    <alternativeName>
        <fullName evidence="1">NDH-1 subunit H</fullName>
    </alternativeName>
</protein>
<reference key="1">
    <citation type="submission" date="2008-02" db="EMBL/GenBank/DDBJ databases">
        <title>Complete sequence of Yersinia pseudotuberculosis YPIII.</title>
        <authorList>
            <consortium name="US DOE Joint Genome Institute"/>
            <person name="Copeland A."/>
            <person name="Lucas S."/>
            <person name="Lapidus A."/>
            <person name="Glavina del Rio T."/>
            <person name="Dalin E."/>
            <person name="Tice H."/>
            <person name="Bruce D."/>
            <person name="Goodwin L."/>
            <person name="Pitluck S."/>
            <person name="Munk A.C."/>
            <person name="Brettin T."/>
            <person name="Detter J.C."/>
            <person name="Han C."/>
            <person name="Tapia R."/>
            <person name="Schmutz J."/>
            <person name="Larimer F."/>
            <person name="Land M."/>
            <person name="Hauser L."/>
            <person name="Challacombe J.F."/>
            <person name="Green L."/>
            <person name="Lindler L.E."/>
            <person name="Nikolich M.P."/>
            <person name="Richardson P."/>
        </authorList>
    </citation>
    <scope>NUCLEOTIDE SEQUENCE [LARGE SCALE GENOMIC DNA]</scope>
    <source>
        <strain>YPIII</strain>
    </source>
</reference>